<name>RPOB_BORBZ</name>
<sequence>MIKRVHLGQGRADEILDLPNLIEIQLNSYEKFLQLDKLKSKKPLLNEGLESVFRNIFPIKSGNGDVALEYERYYIENDALNFTEKECKRKGQSYEAVLKVRLNLQFLTTGEIRQKDVYMGTIPLMTERGTFIINGAERVVVSQIHRSPGVVFYKEKDLYSARIIPYRGSWLEFEIDSKKDYLYVKIDRKKRILITLFLRALGFDTREKIIETFYNIKKIKVEDGTKRDLPGQYLAKSINIRENMYYRAGDKITLQDVEDFLQNGVNEIELVDFDGYDDISGKRFVSSNVILNCLEKEDAFFALKDGSKELPKESVMLAVYSSLFPGEPISIDNAENDLKTIFFSERRYDLGRVGRYKLSKKFGFDDLTTSVLTMDDIVNTISHLLRIYEGHDILDDIDHLGNRRVRSVGELLTNIYKGAMSRVEKIAKDRMSNKEVFNLKPQELISVKPIVSAVKEFFATSQLSQFMDQVNPLAELTHKRRLNALGPGGLSRDRAGFEVRDVHYTHYGRMCPIETPEGPNIGLIVSLATYSRVNDYGFLETPYRKVVNGEVTDQLEYLSAIDEEKKCIAQANAAFNSNGKYLEDLVSVRISGDYTTTSPTNIDYMDVSPRQLISVSSALIPFLEHNDANRALMGSNMQRQAVPLLFPKPPIVGTGMESVVAKDSGVVVKAKRSGEVILATSSKIVVKPFEAENAKDLDEYHIVKYERTNQDTCFNQSVLVKEGQKVERGEIIADGPATRYGELALGNNLLLGVIPWNGFNYEDAILISDRIVKEDLYTSIHIKEFSIEVRETKLGPEKVTGDIPNVSEKILNKLDENGIIRIGTYVKPGDILVGKVTPKSEGDITPEFRLLTSIFGEKAKDVKNNSLKVPHGTEGTVIDVQRITKEDVGNLSPGVEEILKVYVAKKRKLKEGDKMAGRHGNKGVVAKILPVEDMPYLADGTPLDICLNPLGVPSRMNIGQLMESQLGLAGKYLGESYNVPVFESATNEQIQEKLKTAGFNPTSKEILYDGYTGEPFENEVMVGVIYMLKLHHLVDDKMHARSTGPYSLVSQQPLGGKAQFGGQRLGEMEVWALEAYGAAHTLQELLTVKSDDMSGRVKIYENIVKGVPTNVSGIPESFNVLMQELRGLGLDLSIYDDAGNQVPLTEKEEELINKS</sequence>
<dbReference type="EC" id="2.7.7.6" evidence="1"/>
<dbReference type="EMBL" id="CP001205">
    <property type="protein sequence ID" value="ACK74701.1"/>
    <property type="molecule type" value="Genomic_DNA"/>
</dbReference>
<dbReference type="RefSeq" id="WP_002657846.1">
    <property type="nucleotide sequence ID" value="NC_011728.1"/>
</dbReference>
<dbReference type="SMR" id="B7J1W1"/>
<dbReference type="GeneID" id="56567817"/>
<dbReference type="KEGG" id="bbz:BbuZS7_0391"/>
<dbReference type="HOGENOM" id="CLU_000524_4_1_12"/>
<dbReference type="Proteomes" id="UP000006901">
    <property type="component" value="Chromosome"/>
</dbReference>
<dbReference type="GO" id="GO:0000428">
    <property type="term" value="C:DNA-directed RNA polymerase complex"/>
    <property type="evidence" value="ECO:0007669"/>
    <property type="project" value="UniProtKB-KW"/>
</dbReference>
<dbReference type="GO" id="GO:0003677">
    <property type="term" value="F:DNA binding"/>
    <property type="evidence" value="ECO:0007669"/>
    <property type="project" value="UniProtKB-UniRule"/>
</dbReference>
<dbReference type="GO" id="GO:0003899">
    <property type="term" value="F:DNA-directed RNA polymerase activity"/>
    <property type="evidence" value="ECO:0007669"/>
    <property type="project" value="UniProtKB-UniRule"/>
</dbReference>
<dbReference type="GO" id="GO:0032549">
    <property type="term" value="F:ribonucleoside binding"/>
    <property type="evidence" value="ECO:0007669"/>
    <property type="project" value="InterPro"/>
</dbReference>
<dbReference type="GO" id="GO:0006351">
    <property type="term" value="P:DNA-templated transcription"/>
    <property type="evidence" value="ECO:0007669"/>
    <property type="project" value="UniProtKB-UniRule"/>
</dbReference>
<dbReference type="CDD" id="cd00653">
    <property type="entry name" value="RNA_pol_B_RPB2"/>
    <property type="match status" value="1"/>
</dbReference>
<dbReference type="Gene3D" id="2.40.50.100">
    <property type="match status" value="1"/>
</dbReference>
<dbReference type="Gene3D" id="2.40.50.150">
    <property type="match status" value="1"/>
</dbReference>
<dbReference type="Gene3D" id="3.90.1100.10">
    <property type="match status" value="2"/>
</dbReference>
<dbReference type="Gene3D" id="2.30.150.10">
    <property type="entry name" value="DNA-directed RNA polymerase, beta subunit, external 1 domain"/>
    <property type="match status" value="1"/>
</dbReference>
<dbReference type="Gene3D" id="2.40.270.10">
    <property type="entry name" value="DNA-directed RNA polymerase, subunit 2, domain 6"/>
    <property type="match status" value="1"/>
</dbReference>
<dbReference type="Gene3D" id="3.90.1800.10">
    <property type="entry name" value="RNA polymerase alpha subunit dimerisation domain"/>
    <property type="match status" value="1"/>
</dbReference>
<dbReference type="Gene3D" id="3.90.1110.10">
    <property type="entry name" value="RNA polymerase Rpb2, domain 2"/>
    <property type="match status" value="1"/>
</dbReference>
<dbReference type="HAMAP" id="MF_01321">
    <property type="entry name" value="RNApol_bact_RpoB"/>
    <property type="match status" value="1"/>
</dbReference>
<dbReference type="InterPro" id="IPR042107">
    <property type="entry name" value="DNA-dir_RNA_pol_bsu_ext_1_sf"/>
</dbReference>
<dbReference type="InterPro" id="IPR019462">
    <property type="entry name" value="DNA-dir_RNA_pol_bsu_external_1"/>
</dbReference>
<dbReference type="InterPro" id="IPR015712">
    <property type="entry name" value="DNA-dir_RNA_pol_su2"/>
</dbReference>
<dbReference type="InterPro" id="IPR007120">
    <property type="entry name" value="DNA-dir_RNAP_su2_dom"/>
</dbReference>
<dbReference type="InterPro" id="IPR037033">
    <property type="entry name" value="DNA-dir_RNAP_su2_hyb_sf"/>
</dbReference>
<dbReference type="InterPro" id="IPR010243">
    <property type="entry name" value="RNA_pol_bsu_bac"/>
</dbReference>
<dbReference type="InterPro" id="IPR007121">
    <property type="entry name" value="RNA_pol_bsu_CS"/>
</dbReference>
<dbReference type="InterPro" id="IPR007644">
    <property type="entry name" value="RNA_pol_bsu_protrusion"/>
</dbReference>
<dbReference type="InterPro" id="IPR007642">
    <property type="entry name" value="RNA_pol_Rpb2_2"/>
</dbReference>
<dbReference type="InterPro" id="IPR037034">
    <property type="entry name" value="RNA_pol_Rpb2_2_sf"/>
</dbReference>
<dbReference type="InterPro" id="IPR007645">
    <property type="entry name" value="RNA_pol_Rpb2_3"/>
</dbReference>
<dbReference type="InterPro" id="IPR007641">
    <property type="entry name" value="RNA_pol_Rpb2_7"/>
</dbReference>
<dbReference type="InterPro" id="IPR014724">
    <property type="entry name" value="RNA_pol_RPB2_OB-fold"/>
</dbReference>
<dbReference type="NCBIfam" id="NF001616">
    <property type="entry name" value="PRK00405.1"/>
    <property type="match status" value="1"/>
</dbReference>
<dbReference type="NCBIfam" id="TIGR02013">
    <property type="entry name" value="rpoB"/>
    <property type="match status" value="1"/>
</dbReference>
<dbReference type="PANTHER" id="PTHR20856">
    <property type="entry name" value="DNA-DIRECTED RNA POLYMERASE I SUBUNIT 2"/>
    <property type="match status" value="1"/>
</dbReference>
<dbReference type="Pfam" id="PF04563">
    <property type="entry name" value="RNA_pol_Rpb2_1"/>
    <property type="match status" value="1"/>
</dbReference>
<dbReference type="Pfam" id="PF04561">
    <property type="entry name" value="RNA_pol_Rpb2_2"/>
    <property type="match status" value="2"/>
</dbReference>
<dbReference type="Pfam" id="PF04565">
    <property type="entry name" value="RNA_pol_Rpb2_3"/>
    <property type="match status" value="1"/>
</dbReference>
<dbReference type="Pfam" id="PF10385">
    <property type="entry name" value="RNA_pol_Rpb2_45"/>
    <property type="match status" value="1"/>
</dbReference>
<dbReference type="Pfam" id="PF00562">
    <property type="entry name" value="RNA_pol_Rpb2_6"/>
    <property type="match status" value="1"/>
</dbReference>
<dbReference type="Pfam" id="PF04560">
    <property type="entry name" value="RNA_pol_Rpb2_7"/>
    <property type="match status" value="1"/>
</dbReference>
<dbReference type="SUPFAM" id="SSF64484">
    <property type="entry name" value="beta and beta-prime subunits of DNA dependent RNA-polymerase"/>
    <property type="match status" value="1"/>
</dbReference>
<dbReference type="PROSITE" id="PS01166">
    <property type="entry name" value="RNA_POL_BETA"/>
    <property type="match status" value="1"/>
</dbReference>
<protein>
    <recommendedName>
        <fullName evidence="1">DNA-directed RNA polymerase subunit beta</fullName>
        <shortName evidence="1">RNAP subunit beta</shortName>
        <ecNumber evidence="1">2.7.7.6</ecNumber>
    </recommendedName>
    <alternativeName>
        <fullName evidence="1">RNA polymerase subunit beta</fullName>
    </alternativeName>
    <alternativeName>
        <fullName evidence="1">Transcriptase subunit beta</fullName>
    </alternativeName>
</protein>
<accession>B7J1W1</accession>
<gene>
    <name evidence="1" type="primary">rpoB</name>
    <name type="ordered locus">BbuZS7_0391</name>
</gene>
<proteinExistence type="inferred from homology"/>
<feature type="chain" id="PRO_1000141662" description="DNA-directed RNA polymerase subunit beta">
    <location>
        <begin position="1"/>
        <end position="1155"/>
    </location>
</feature>
<evidence type="ECO:0000255" key="1">
    <source>
        <dbReference type="HAMAP-Rule" id="MF_01321"/>
    </source>
</evidence>
<comment type="function">
    <text evidence="1">DNA-dependent RNA polymerase catalyzes the transcription of DNA into RNA using the four ribonucleoside triphosphates as substrates.</text>
</comment>
<comment type="catalytic activity">
    <reaction evidence="1">
        <text>RNA(n) + a ribonucleoside 5'-triphosphate = RNA(n+1) + diphosphate</text>
        <dbReference type="Rhea" id="RHEA:21248"/>
        <dbReference type="Rhea" id="RHEA-COMP:14527"/>
        <dbReference type="Rhea" id="RHEA-COMP:17342"/>
        <dbReference type="ChEBI" id="CHEBI:33019"/>
        <dbReference type="ChEBI" id="CHEBI:61557"/>
        <dbReference type="ChEBI" id="CHEBI:140395"/>
        <dbReference type="EC" id="2.7.7.6"/>
    </reaction>
</comment>
<comment type="subunit">
    <text evidence="1">The RNAP catalytic core consists of 2 alpha, 1 beta, 1 beta' and 1 omega subunit. When a sigma factor is associated with the core the holoenzyme is formed, which can initiate transcription.</text>
</comment>
<comment type="similarity">
    <text evidence="1">Belongs to the RNA polymerase beta chain family.</text>
</comment>
<organism>
    <name type="scientific">Borreliella burgdorferi (strain ZS7)</name>
    <name type="common">Borrelia burgdorferi</name>
    <dbReference type="NCBI Taxonomy" id="445985"/>
    <lineage>
        <taxon>Bacteria</taxon>
        <taxon>Pseudomonadati</taxon>
        <taxon>Spirochaetota</taxon>
        <taxon>Spirochaetia</taxon>
        <taxon>Spirochaetales</taxon>
        <taxon>Borreliaceae</taxon>
        <taxon>Borreliella</taxon>
    </lineage>
</organism>
<keyword id="KW-0240">DNA-directed RNA polymerase</keyword>
<keyword id="KW-0548">Nucleotidyltransferase</keyword>
<keyword id="KW-0804">Transcription</keyword>
<keyword id="KW-0808">Transferase</keyword>
<reference key="1">
    <citation type="journal article" date="2011" name="J. Bacteriol.">
        <title>Whole-genome sequences of thirteen isolates of Borrelia burgdorferi.</title>
        <authorList>
            <person name="Schutzer S.E."/>
            <person name="Fraser-Liggett C.M."/>
            <person name="Casjens S.R."/>
            <person name="Qiu W.G."/>
            <person name="Dunn J.J."/>
            <person name="Mongodin E.F."/>
            <person name="Luft B.J."/>
        </authorList>
    </citation>
    <scope>NUCLEOTIDE SEQUENCE [LARGE SCALE GENOMIC DNA]</scope>
    <source>
        <strain>ZS7</strain>
    </source>
</reference>